<organism>
    <name type="scientific">Arabidopsis thaliana</name>
    <name type="common">Mouse-ear cress</name>
    <dbReference type="NCBI Taxonomy" id="3702"/>
    <lineage>
        <taxon>Eukaryota</taxon>
        <taxon>Viridiplantae</taxon>
        <taxon>Streptophyta</taxon>
        <taxon>Embryophyta</taxon>
        <taxon>Tracheophyta</taxon>
        <taxon>Spermatophyta</taxon>
        <taxon>Magnoliopsida</taxon>
        <taxon>eudicotyledons</taxon>
        <taxon>Gunneridae</taxon>
        <taxon>Pentapetalae</taxon>
        <taxon>rosids</taxon>
        <taxon>malvids</taxon>
        <taxon>Brassicales</taxon>
        <taxon>Brassicaceae</taxon>
        <taxon>Camelineae</taxon>
        <taxon>Arabidopsis</taxon>
    </lineage>
</organism>
<comment type="function">
    <text evidence="1">Involved in ubiquitination and subsequent proteasomal degradation of target proteins. Together with CUL1, RBX1 and a F-box protein, it forms a SCF E3 ubiquitin ligase complex. The functional specificity of this complex depends on the type of F-box protein. In the SCF complex, it serves as an adapter that links the F-box protein to CUL1 (By similarity).</text>
</comment>
<comment type="pathway">
    <text>Protein modification; protein ubiquitination.</text>
</comment>
<comment type="subunit">
    <text evidence="1">Part of a SCF (SKP1-cullin-F-box) protein ligase complex.</text>
</comment>
<comment type="subcellular location">
    <subcellularLocation>
        <location evidence="1">Nucleus</location>
    </subcellularLocation>
</comment>
<comment type="alternative products">
    <event type="alternative splicing"/>
    <isoform>
        <id>Q8LF97-1</id>
        <name>1</name>
        <sequence type="displayed"/>
    </isoform>
    <isoform>
        <id>Q8LF97-2</id>
        <name>2</name>
        <sequence type="described" ref="VSP_037368"/>
    </isoform>
</comment>
<comment type="tissue specificity">
    <text evidence="3">Expressed in young seedlings, roots, leaves, floral stems, inflorescences, and siliques.</text>
</comment>
<comment type="similarity">
    <text evidence="4">Belongs to the SKP1 family.</text>
</comment>
<reference key="1">
    <citation type="journal article" date="2000" name="Nature">
        <title>Sequence and analysis of chromosome 3 of the plant Arabidopsis thaliana.</title>
        <authorList>
            <person name="Salanoubat M."/>
            <person name="Lemcke K."/>
            <person name="Rieger M."/>
            <person name="Ansorge W."/>
            <person name="Unseld M."/>
            <person name="Fartmann B."/>
            <person name="Valle G."/>
            <person name="Bloecker H."/>
            <person name="Perez-Alonso M."/>
            <person name="Obermaier B."/>
            <person name="Delseny M."/>
            <person name="Boutry M."/>
            <person name="Grivell L.A."/>
            <person name="Mache R."/>
            <person name="Puigdomenech P."/>
            <person name="De Simone V."/>
            <person name="Choisne N."/>
            <person name="Artiguenave F."/>
            <person name="Robert C."/>
            <person name="Brottier P."/>
            <person name="Wincker P."/>
            <person name="Cattolico L."/>
            <person name="Weissenbach J."/>
            <person name="Saurin W."/>
            <person name="Quetier F."/>
            <person name="Schaefer M."/>
            <person name="Mueller-Auer S."/>
            <person name="Gabel C."/>
            <person name="Fuchs M."/>
            <person name="Benes V."/>
            <person name="Wurmbach E."/>
            <person name="Drzonek H."/>
            <person name="Erfle H."/>
            <person name="Jordan N."/>
            <person name="Bangert S."/>
            <person name="Wiedelmann R."/>
            <person name="Kranz H."/>
            <person name="Voss H."/>
            <person name="Holland R."/>
            <person name="Brandt P."/>
            <person name="Nyakatura G."/>
            <person name="Vezzi A."/>
            <person name="D'Angelo M."/>
            <person name="Pallavicini A."/>
            <person name="Toppo S."/>
            <person name="Simionati B."/>
            <person name="Conrad A."/>
            <person name="Hornischer K."/>
            <person name="Kauer G."/>
            <person name="Loehnert T.-H."/>
            <person name="Nordsiek G."/>
            <person name="Reichelt J."/>
            <person name="Scharfe M."/>
            <person name="Schoen O."/>
            <person name="Bargues M."/>
            <person name="Terol J."/>
            <person name="Climent J."/>
            <person name="Navarro P."/>
            <person name="Collado C."/>
            <person name="Perez-Perez A."/>
            <person name="Ottenwaelder B."/>
            <person name="Duchemin D."/>
            <person name="Cooke R."/>
            <person name="Laudie M."/>
            <person name="Berger-Llauro C."/>
            <person name="Purnelle B."/>
            <person name="Masuy D."/>
            <person name="de Haan M."/>
            <person name="Maarse A.C."/>
            <person name="Alcaraz J.-P."/>
            <person name="Cottet A."/>
            <person name="Casacuberta E."/>
            <person name="Monfort A."/>
            <person name="Argiriou A."/>
            <person name="Flores M."/>
            <person name="Liguori R."/>
            <person name="Vitale D."/>
            <person name="Mannhaupt G."/>
            <person name="Haase D."/>
            <person name="Schoof H."/>
            <person name="Rudd S."/>
            <person name="Zaccaria P."/>
            <person name="Mewes H.-W."/>
            <person name="Mayer K.F.X."/>
            <person name="Kaul S."/>
            <person name="Town C.D."/>
            <person name="Koo H.L."/>
            <person name="Tallon L.J."/>
            <person name="Jenkins J."/>
            <person name="Rooney T."/>
            <person name="Rizzo M."/>
            <person name="Walts A."/>
            <person name="Utterback T."/>
            <person name="Fujii C.Y."/>
            <person name="Shea T.P."/>
            <person name="Creasy T.H."/>
            <person name="Haas B."/>
            <person name="Maiti R."/>
            <person name="Wu D."/>
            <person name="Peterson J."/>
            <person name="Van Aken S."/>
            <person name="Pai G."/>
            <person name="Militscher J."/>
            <person name="Sellers P."/>
            <person name="Gill J.E."/>
            <person name="Feldblyum T.V."/>
            <person name="Preuss D."/>
            <person name="Lin X."/>
            <person name="Nierman W.C."/>
            <person name="Salzberg S.L."/>
            <person name="White O."/>
            <person name="Venter J.C."/>
            <person name="Fraser C.M."/>
            <person name="Kaneko T."/>
            <person name="Nakamura Y."/>
            <person name="Sato S."/>
            <person name="Kato T."/>
            <person name="Asamizu E."/>
            <person name="Sasamoto S."/>
            <person name="Kimura T."/>
            <person name="Idesawa K."/>
            <person name="Kawashima K."/>
            <person name="Kishida Y."/>
            <person name="Kiyokawa C."/>
            <person name="Kohara M."/>
            <person name="Matsumoto M."/>
            <person name="Matsuno A."/>
            <person name="Muraki A."/>
            <person name="Nakayama S."/>
            <person name="Nakazaki N."/>
            <person name="Shinpo S."/>
            <person name="Takeuchi C."/>
            <person name="Wada T."/>
            <person name="Watanabe A."/>
            <person name="Yamada M."/>
            <person name="Yasuda M."/>
            <person name="Tabata S."/>
        </authorList>
    </citation>
    <scope>NUCLEOTIDE SEQUENCE [LARGE SCALE GENOMIC DNA]</scope>
    <source>
        <strain>cv. Columbia</strain>
    </source>
</reference>
<reference key="2">
    <citation type="journal article" date="2017" name="Plant J.">
        <title>Araport11: a complete reannotation of the Arabidopsis thaliana reference genome.</title>
        <authorList>
            <person name="Cheng C.Y."/>
            <person name="Krishnakumar V."/>
            <person name="Chan A.P."/>
            <person name="Thibaud-Nissen F."/>
            <person name="Schobel S."/>
            <person name="Town C.D."/>
        </authorList>
    </citation>
    <scope>GENOME REANNOTATION</scope>
    <source>
        <strain>cv. Columbia</strain>
    </source>
</reference>
<reference key="3">
    <citation type="submission" date="2002-03" db="EMBL/GenBank/DDBJ databases">
        <title>Full-length cDNA from Arabidopsis thaliana.</title>
        <authorList>
            <person name="Brover V.V."/>
            <person name="Troukhan M.E."/>
            <person name="Alexandrov N.A."/>
            <person name="Lu Y.-P."/>
            <person name="Flavell R.B."/>
            <person name="Feldmann K.A."/>
        </authorList>
    </citation>
    <scope>NUCLEOTIDE SEQUENCE [LARGE SCALE MRNA] (ISOFORM 1)</scope>
</reference>
<reference key="4">
    <citation type="journal article" date="2003" name="Plant Physiol.">
        <title>Members of the Arabidopsis-SKP1-like gene family exhibit a variety of expression patterns and may play diverse roles in Arabidopsis.</title>
        <authorList>
            <person name="Zhao D."/>
            <person name="Ni W."/>
            <person name="Feng B."/>
            <person name="Han T."/>
            <person name="Petrasek M.G."/>
            <person name="Ma H."/>
        </authorList>
    </citation>
    <scope>GENE FAMILY</scope>
    <scope>NOMENCLATURE</scope>
    <scope>TISSUE SPECIFICITY</scope>
</reference>
<dbReference type="EMBL" id="AL132962">
    <property type="status" value="NOT_ANNOTATED_CDS"/>
    <property type="molecule type" value="Genomic_DNA"/>
</dbReference>
<dbReference type="EMBL" id="CP002686">
    <property type="protein sequence ID" value="AEE80198.1"/>
    <property type="molecule type" value="Genomic_DNA"/>
</dbReference>
<dbReference type="EMBL" id="CP002686">
    <property type="protein sequence ID" value="AEE80199.1"/>
    <property type="molecule type" value="Genomic_DNA"/>
</dbReference>
<dbReference type="EMBL" id="AY084971">
    <property type="protein sequence ID" value="AAM61531.1"/>
    <property type="molecule type" value="mRNA"/>
</dbReference>
<dbReference type="RefSeq" id="NP_001118876.1">
    <molecule id="Q8LF97-2"/>
    <property type="nucleotide sequence ID" value="NM_001125404.1"/>
</dbReference>
<dbReference type="RefSeq" id="NP_567113.1">
    <molecule id="Q8LF97-1"/>
    <property type="nucleotide sequence ID" value="NM_116006.4"/>
</dbReference>
<dbReference type="SMR" id="Q8LF97"/>
<dbReference type="ComplexPortal" id="CPX-1448">
    <property type="entry name" value="SCF(COI1) ubiquitin ligase complex, variant CUL1-RBX1A-ASK21"/>
</dbReference>
<dbReference type="ComplexPortal" id="CPX-1469">
    <property type="entry name" value="SCF(COI1) ubiquitin ligase complex, variant CUL1-RBX1B-ASK21"/>
</dbReference>
<dbReference type="ComplexPortal" id="CPX-1491">
    <property type="entry name" value="SCF(COI1) ubiquitin ligase complex, variant CUL2-RBX1A-ASK21"/>
</dbReference>
<dbReference type="ComplexPortal" id="CPX-1514">
    <property type="entry name" value="SCF(COI1) ubiquitin ligase complex, variant CUL2-RBX1B-ASK21"/>
</dbReference>
<dbReference type="ComplexPortal" id="CPX-1534">
    <property type="entry name" value="SCF(TIR1) ubiquitin ligase complex, variant CUL1-RBX1A-ASK21"/>
</dbReference>
<dbReference type="ComplexPortal" id="CPX-1555">
    <property type="entry name" value="SCF(TIR1) ubiquitin ligase complex, variant CUL1-RBX1B-ASK21"/>
</dbReference>
<dbReference type="ComplexPortal" id="CPX-1577">
    <property type="entry name" value="SCF(TIR1) ubiquitin ligase complex, variant CUL2-RBX1A-ASK21"/>
</dbReference>
<dbReference type="ComplexPortal" id="CPX-1598">
    <property type="entry name" value="SCF(TIR1) ubiquitin ligase complex, variant CUL2-RBX1B-ASK21"/>
</dbReference>
<dbReference type="FunCoup" id="Q8LF97">
    <property type="interactions" value="1279"/>
</dbReference>
<dbReference type="STRING" id="3702.Q8LF97"/>
<dbReference type="PaxDb" id="3702-AT3G61415.1"/>
<dbReference type="ProteomicsDB" id="246793">
    <molecule id="Q8LF97-1"/>
</dbReference>
<dbReference type="EnsemblPlants" id="AT3G61415.1">
    <molecule id="Q8LF97-1"/>
    <property type="protein sequence ID" value="AT3G61415.1"/>
    <property type="gene ID" value="AT3G61415"/>
</dbReference>
<dbReference type="EnsemblPlants" id="AT3G61415.2">
    <molecule id="Q8LF97-2"/>
    <property type="protein sequence ID" value="AT3G61415.2"/>
    <property type="gene ID" value="AT3G61415"/>
</dbReference>
<dbReference type="GeneID" id="825314"/>
<dbReference type="Gramene" id="AT3G61415.1">
    <molecule id="Q8LF97-1"/>
    <property type="protein sequence ID" value="AT3G61415.1"/>
    <property type="gene ID" value="AT3G61415"/>
</dbReference>
<dbReference type="Gramene" id="AT3G61415.2">
    <molecule id="Q8LF97-2"/>
    <property type="protein sequence ID" value="AT3G61415.2"/>
    <property type="gene ID" value="AT3G61415"/>
</dbReference>
<dbReference type="KEGG" id="ath:AT3G61415"/>
<dbReference type="Araport" id="AT3G61415"/>
<dbReference type="TAIR" id="AT3G61415">
    <property type="gene designation" value="SK21"/>
</dbReference>
<dbReference type="eggNOG" id="KOG1724">
    <property type="taxonomic scope" value="Eukaryota"/>
</dbReference>
<dbReference type="HOGENOM" id="CLU_039678_0_0_1"/>
<dbReference type="InParanoid" id="Q8LF97"/>
<dbReference type="OMA" id="REFCFAD"/>
<dbReference type="PhylomeDB" id="Q8LF97"/>
<dbReference type="UniPathway" id="UPA00143"/>
<dbReference type="PRO" id="PR:Q8LF97"/>
<dbReference type="Proteomes" id="UP000006548">
    <property type="component" value="Chromosome 3"/>
</dbReference>
<dbReference type="ExpressionAtlas" id="Q8LF97">
    <property type="expression patterns" value="baseline and differential"/>
</dbReference>
<dbReference type="GO" id="GO:0005634">
    <property type="term" value="C:nucleus"/>
    <property type="evidence" value="ECO:0007669"/>
    <property type="project" value="UniProtKB-SubCell"/>
</dbReference>
<dbReference type="GO" id="GO:0019005">
    <property type="term" value="C:SCF ubiquitin ligase complex"/>
    <property type="evidence" value="ECO:0000250"/>
    <property type="project" value="TAIR"/>
</dbReference>
<dbReference type="GO" id="GO:0009734">
    <property type="term" value="P:auxin-activated signaling pathway"/>
    <property type="evidence" value="ECO:0000303"/>
    <property type="project" value="ComplexPortal"/>
</dbReference>
<dbReference type="GO" id="GO:0009867">
    <property type="term" value="P:jasmonic acid mediated signaling pathway"/>
    <property type="evidence" value="ECO:0000315"/>
    <property type="project" value="ComplexPortal"/>
</dbReference>
<dbReference type="GO" id="GO:0016567">
    <property type="term" value="P:protein ubiquitination"/>
    <property type="evidence" value="ECO:0007669"/>
    <property type="project" value="UniProtKB-UniPathway"/>
</dbReference>
<dbReference type="GO" id="GO:0009733">
    <property type="term" value="P:response to auxin"/>
    <property type="evidence" value="ECO:0000303"/>
    <property type="project" value="ComplexPortal"/>
</dbReference>
<dbReference type="GO" id="GO:0009753">
    <property type="term" value="P:response to jasmonic acid"/>
    <property type="evidence" value="ECO:0000315"/>
    <property type="project" value="ComplexPortal"/>
</dbReference>
<dbReference type="GO" id="GO:0006511">
    <property type="term" value="P:ubiquitin-dependent protein catabolic process"/>
    <property type="evidence" value="ECO:0007669"/>
    <property type="project" value="InterPro"/>
</dbReference>
<dbReference type="FunFam" id="3.30.710.10:FF:000022">
    <property type="entry name" value="SKP1-like protein 21 isoform X1"/>
    <property type="match status" value="1"/>
</dbReference>
<dbReference type="Gene3D" id="3.30.710.10">
    <property type="entry name" value="Potassium Channel Kv1.1, Chain A"/>
    <property type="match status" value="1"/>
</dbReference>
<dbReference type="InterPro" id="IPR016897">
    <property type="entry name" value="SKP1"/>
</dbReference>
<dbReference type="InterPro" id="IPR001232">
    <property type="entry name" value="SKP1-like"/>
</dbReference>
<dbReference type="InterPro" id="IPR036296">
    <property type="entry name" value="SKP1-like_dim_sf"/>
</dbReference>
<dbReference type="InterPro" id="IPR011333">
    <property type="entry name" value="SKP1/BTB/POZ_sf"/>
</dbReference>
<dbReference type="InterPro" id="IPR016072">
    <property type="entry name" value="Skp1_comp_dimer"/>
</dbReference>
<dbReference type="PANTHER" id="PTHR11165">
    <property type="entry name" value="SKP1"/>
    <property type="match status" value="1"/>
</dbReference>
<dbReference type="Pfam" id="PF01466">
    <property type="entry name" value="Skp1"/>
    <property type="match status" value="1"/>
</dbReference>
<dbReference type="SMART" id="SM00512">
    <property type="entry name" value="Skp1"/>
    <property type="match status" value="1"/>
</dbReference>
<dbReference type="SUPFAM" id="SSF54695">
    <property type="entry name" value="POZ domain"/>
    <property type="match status" value="1"/>
</dbReference>
<dbReference type="SUPFAM" id="SSF81382">
    <property type="entry name" value="Skp1 dimerisation domain-like"/>
    <property type="match status" value="1"/>
</dbReference>
<sequence>MSEGEMAIIKPEMMKSYIWLETADGSIQQVEQEVAMFCPMICQEVIQKGVGSSKNYAISLPQRVNPAMLSLIFDYCRFHQVPGRSNKERKVYDEKFIRMDTKRLCELTSAADSLQLKPLVDLTSRALARIIEGKTPEEIREIFHLPDDLTEEEKLEPLKNTMDDPRIRLLNRLYAKKRKELKEREKLKSVEVEEHVDERSVDDLLSFINGRDPKVVKTSKSKKKNKKRKEQKNGSSNGTCEALEKDLHNLDSKSQSAEIVDNTASCLGDVSNLPSMEDDIFTPKTEFEDGYIDDEIDPALKELLDREVEDFARRLNSSWVLSIGQERQPVNFSINGNGTSRRLTGPAAGHK</sequence>
<evidence type="ECO:0000250" key="1"/>
<evidence type="ECO:0000256" key="2">
    <source>
        <dbReference type="SAM" id="MobiDB-lite"/>
    </source>
</evidence>
<evidence type="ECO:0000269" key="3">
    <source>
    </source>
</evidence>
<evidence type="ECO:0000305" key="4"/>
<name>ASK21_ARATH</name>
<keyword id="KW-0025">Alternative splicing</keyword>
<keyword id="KW-0539">Nucleus</keyword>
<keyword id="KW-1185">Reference proteome</keyword>
<keyword id="KW-0833">Ubl conjugation pathway</keyword>
<accession>Q8LF97</accession>
<accession>B3H792</accession>
<protein>
    <recommendedName>
        <fullName>SKP1-like protein 21</fullName>
        <shortName>AtSK21</shortName>
    </recommendedName>
</protein>
<feature type="chain" id="PRO_0000375262" description="SKP1-like protein 21">
    <location>
        <begin position="1"/>
        <end position="351"/>
    </location>
</feature>
<feature type="region of interest" description="Interaction with the F-box domain of F-box proteins" evidence="1">
    <location>
        <begin position="108"/>
        <end position="167"/>
    </location>
</feature>
<feature type="region of interest" description="Disordered" evidence="2">
    <location>
        <begin position="216"/>
        <end position="240"/>
    </location>
</feature>
<feature type="region of interest" description="Disordered" evidence="2">
    <location>
        <begin position="330"/>
        <end position="351"/>
    </location>
</feature>
<feature type="compositionally biased region" description="Basic residues" evidence="2">
    <location>
        <begin position="217"/>
        <end position="230"/>
    </location>
</feature>
<feature type="compositionally biased region" description="Polar residues" evidence="2">
    <location>
        <begin position="330"/>
        <end position="342"/>
    </location>
</feature>
<feature type="splice variant" id="VSP_037368" description="In isoform 2." evidence="4">
    <original>GPAAGHK</original>
    <variation>EIGHT</variation>
    <location>
        <begin position="345"/>
        <end position="351"/>
    </location>
</feature>
<proteinExistence type="evidence at transcript level"/>
<gene>
    <name type="primary">ASK21</name>
    <name type="ordered locus">At3g61415</name>
    <name type="ORF">F2A19.5</name>
</gene>